<reference key="1">
    <citation type="journal article" date="2000" name="Nature">
        <title>Sequence and analysis of chromosome 3 of the plant Arabidopsis thaliana.</title>
        <authorList>
            <person name="Salanoubat M."/>
            <person name="Lemcke K."/>
            <person name="Rieger M."/>
            <person name="Ansorge W."/>
            <person name="Unseld M."/>
            <person name="Fartmann B."/>
            <person name="Valle G."/>
            <person name="Bloecker H."/>
            <person name="Perez-Alonso M."/>
            <person name="Obermaier B."/>
            <person name="Delseny M."/>
            <person name="Boutry M."/>
            <person name="Grivell L.A."/>
            <person name="Mache R."/>
            <person name="Puigdomenech P."/>
            <person name="De Simone V."/>
            <person name="Choisne N."/>
            <person name="Artiguenave F."/>
            <person name="Robert C."/>
            <person name="Brottier P."/>
            <person name="Wincker P."/>
            <person name="Cattolico L."/>
            <person name="Weissenbach J."/>
            <person name="Saurin W."/>
            <person name="Quetier F."/>
            <person name="Schaefer M."/>
            <person name="Mueller-Auer S."/>
            <person name="Gabel C."/>
            <person name="Fuchs M."/>
            <person name="Benes V."/>
            <person name="Wurmbach E."/>
            <person name="Drzonek H."/>
            <person name="Erfle H."/>
            <person name="Jordan N."/>
            <person name="Bangert S."/>
            <person name="Wiedelmann R."/>
            <person name="Kranz H."/>
            <person name="Voss H."/>
            <person name="Holland R."/>
            <person name="Brandt P."/>
            <person name="Nyakatura G."/>
            <person name="Vezzi A."/>
            <person name="D'Angelo M."/>
            <person name="Pallavicini A."/>
            <person name="Toppo S."/>
            <person name="Simionati B."/>
            <person name="Conrad A."/>
            <person name="Hornischer K."/>
            <person name="Kauer G."/>
            <person name="Loehnert T.-H."/>
            <person name="Nordsiek G."/>
            <person name="Reichelt J."/>
            <person name="Scharfe M."/>
            <person name="Schoen O."/>
            <person name="Bargues M."/>
            <person name="Terol J."/>
            <person name="Climent J."/>
            <person name="Navarro P."/>
            <person name="Collado C."/>
            <person name="Perez-Perez A."/>
            <person name="Ottenwaelder B."/>
            <person name="Duchemin D."/>
            <person name="Cooke R."/>
            <person name="Laudie M."/>
            <person name="Berger-Llauro C."/>
            <person name="Purnelle B."/>
            <person name="Masuy D."/>
            <person name="de Haan M."/>
            <person name="Maarse A.C."/>
            <person name="Alcaraz J.-P."/>
            <person name="Cottet A."/>
            <person name="Casacuberta E."/>
            <person name="Monfort A."/>
            <person name="Argiriou A."/>
            <person name="Flores M."/>
            <person name="Liguori R."/>
            <person name="Vitale D."/>
            <person name="Mannhaupt G."/>
            <person name="Haase D."/>
            <person name="Schoof H."/>
            <person name="Rudd S."/>
            <person name="Zaccaria P."/>
            <person name="Mewes H.-W."/>
            <person name="Mayer K.F.X."/>
            <person name="Kaul S."/>
            <person name="Town C.D."/>
            <person name="Koo H.L."/>
            <person name="Tallon L.J."/>
            <person name="Jenkins J."/>
            <person name="Rooney T."/>
            <person name="Rizzo M."/>
            <person name="Walts A."/>
            <person name="Utterback T."/>
            <person name="Fujii C.Y."/>
            <person name="Shea T.P."/>
            <person name="Creasy T.H."/>
            <person name="Haas B."/>
            <person name="Maiti R."/>
            <person name="Wu D."/>
            <person name="Peterson J."/>
            <person name="Van Aken S."/>
            <person name="Pai G."/>
            <person name="Militscher J."/>
            <person name="Sellers P."/>
            <person name="Gill J.E."/>
            <person name="Feldblyum T.V."/>
            <person name="Preuss D."/>
            <person name="Lin X."/>
            <person name="Nierman W.C."/>
            <person name="Salzberg S.L."/>
            <person name="White O."/>
            <person name="Venter J.C."/>
            <person name="Fraser C.M."/>
            <person name="Kaneko T."/>
            <person name="Nakamura Y."/>
            <person name="Sato S."/>
            <person name="Kato T."/>
            <person name="Asamizu E."/>
            <person name="Sasamoto S."/>
            <person name="Kimura T."/>
            <person name="Idesawa K."/>
            <person name="Kawashima K."/>
            <person name="Kishida Y."/>
            <person name="Kiyokawa C."/>
            <person name="Kohara M."/>
            <person name="Matsumoto M."/>
            <person name="Matsuno A."/>
            <person name="Muraki A."/>
            <person name="Nakayama S."/>
            <person name="Nakazaki N."/>
            <person name="Shinpo S."/>
            <person name="Takeuchi C."/>
            <person name="Wada T."/>
            <person name="Watanabe A."/>
            <person name="Yamada M."/>
            <person name="Yasuda M."/>
            <person name="Tabata S."/>
        </authorList>
    </citation>
    <scope>NUCLEOTIDE SEQUENCE [LARGE SCALE GENOMIC DNA]</scope>
    <source>
        <strain>cv. Columbia</strain>
    </source>
</reference>
<reference key="2">
    <citation type="journal article" date="2017" name="Plant J.">
        <title>Araport11: a complete reannotation of the Arabidopsis thaliana reference genome.</title>
        <authorList>
            <person name="Cheng C.Y."/>
            <person name="Krishnakumar V."/>
            <person name="Chan A.P."/>
            <person name="Thibaud-Nissen F."/>
            <person name="Schobel S."/>
            <person name="Town C.D."/>
        </authorList>
    </citation>
    <scope>GENOME REANNOTATION</scope>
    <source>
        <strain>cv. Columbia</strain>
    </source>
</reference>
<reference key="3">
    <citation type="journal article" date="2003" name="Science">
        <title>Empirical analysis of transcriptional activity in the Arabidopsis genome.</title>
        <authorList>
            <person name="Yamada K."/>
            <person name="Lim J."/>
            <person name="Dale J.M."/>
            <person name="Chen H."/>
            <person name="Shinn P."/>
            <person name="Palm C.J."/>
            <person name="Southwick A.M."/>
            <person name="Wu H.C."/>
            <person name="Kim C.J."/>
            <person name="Nguyen M."/>
            <person name="Pham P.K."/>
            <person name="Cheuk R.F."/>
            <person name="Karlin-Newmann G."/>
            <person name="Liu S.X."/>
            <person name="Lam B."/>
            <person name="Sakano H."/>
            <person name="Wu T."/>
            <person name="Yu G."/>
            <person name="Miranda M."/>
            <person name="Quach H.L."/>
            <person name="Tripp M."/>
            <person name="Chang C.H."/>
            <person name="Lee J.M."/>
            <person name="Toriumi M.J."/>
            <person name="Chan M.M."/>
            <person name="Tang C.C."/>
            <person name="Onodera C.S."/>
            <person name="Deng J.M."/>
            <person name="Akiyama K."/>
            <person name="Ansari Y."/>
            <person name="Arakawa T."/>
            <person name="Banh J."/>
            <person name="Banno F."/>
            <person name="Bowser L."/>
            <person name="Brooks S.Y."/>
            <person name="Carninci P."/>
            <person name="Chao Q."/>
            <person name="Choy N."/>
            <person name="Enju A."/>
            <person name="Goldsmith A.D."/>
            <person name="Gurjal M."/>
            <person name="Hansen N.F."/>
            <person name="Hayashizaki Y."/>
            <person name="Johnson-Hopson C."/>
            <person name="Hsuan V.W."/>
            <person name="Iida K."/>
            <person name="Karnes M."/>
            <person name="Khan S."/>
            <person name="Koesema E."/>
            <person name="Ishida J."/>
            <person name="Jiang P.X."/>
            <person name="Jones T."/>
            <person name="Kawai J."/>
            <person name="Kamiya A."/>
            <person name="Meyers C."/>
            <person name="Nakajima M."/>
            <person name="Narusaka M."/>
            <person name="Seki M."/>
            <person name="Sakurai T."/>
            <person name="Satou M."/>
            <person name="Tamse R."/>
            <person name="Vaysberg M."/>
            <person name="Wallender E.K."/>
            <person name="Wong C."/>
            <person name="Yamamura Y."/>
            <person name="Yuan S."/>
            <person name="Shinozaki K."/>
            <person name="Davis R.W."/>
            <person name="Theologis A."/>
            <person name="Ecker J.R."/>
        </authorList>
    </citation>
    <scope>NUCLEOTIDE SEQUENCE [LARGE SCALE MRNA]</scope>
    <source>
        <strain>cv. Columbia</strain>
    </source>
</reference>
<reference key="4">
    <citation type="submission" date="2002-03" db="EMBL/GenBank/DDBJ databases">
        <title>Full-length cDNA from Arabidopsis thaliana.</title>
        <authorList>
            <person name="Brover V.V."/>
            <person name="Troukhan M.E."/>
            <person name="Alexandrov N.A."/>
            <person name="Lu Y.-P."/>
            <person name="Flavell R.B."/>
            <person name="Feldmann K.A."/>
        </authorList>
    </citation>
    <scope>NUCLEOTIDE SEQUENCE [LARGE SCALE MRNA]</scope>
</reference>
<feature type="chain" id="PRO_0000414075" description="WEB family protein At3g56270">
    <location>
        <begin position="1"/>
        <end position="446"/>
    </location>
</feature>
<feature type="coiled-coil region" evidence="1">
    <location>
        <begin position="313"/>
        <end position="349"/>
    </location>
</feature>
<name>Y3270_ARATH</name>
<keyword id="KW-0175">Coiled coil</keyword>
<keyword id="KW-1185">Reference proteome</keyword>
<evidence type="ECO:0000255" key="1"/>
<evidence type="ECO:0000305" key="2"/>
<protein>
    <recommendedName>
        <fullName>WEB family protein At3g56270</fullName>
    </recommendedName>
</protein>
<organism>
    <name type="scientific">Arabidopsis thaliana</name>
    <name type="common">Mouse-ear cress</name>
    <dbReference type="NCBI Taxonomy" id="3702"/>
    <lineage>
        <taxon>Eukaryota</taxon>
        <taxon>Viridiplantae</taxon>
        <taxon>Streptophyta</taxon>
        <taxon>Embryophyta</taxon>
        <taxon>Tracheophyta</taxon>
        <taxon>Spermatophyta</taxon>
        <taxon>Magnoliopsida</taxon>
        <taxon>eudicotyledons</taxon>
        <taxon>Gunneridae</taxon>
        <taxon>Pentapetalae</taxon>
        <taxon>rosids</taxon>
        <taxon>malvids</taxon>
        <taxon>Brassicales</taxon>
        <taxon>Brassicaceae</taxon>
        <taxon>Camelineae</taxon>
        <taxon>Arabidopsis</taxon>
    </lineage>
</organism>
<gene>
    <name type="ordered locus">At3g56270</name>
    <name type="ORF">F18O21_230</name>
</gene>
<proteinExistence type="evidence at protein level"/>
<dbReference type="EMBL" id="AL163763">
    <property type="protein sequence ID" value="CAB87426.1"/>
    <property type="molecule type" value="Genomic_DNA"/>
</dbReference>
<dbReference type="EMBL" id="CP002686">
    <property type="protein sequence ID" value="AEE79504.1"/>
    <property type="molecule type" value="Genomic_DNA"/>
</dbReference>
<dbReference type="EMBL" id="BT004218">
    <property type="protein sequence ID" value="AAO42235.1"/>
    <property type="molecule type" value="mRNA"/>
</dbReference>
<dbReference type="EMBL" id="BT005056">
    <property type="protein sequence ID" value="AAO50589.1"/>
    <property type="molecule type" value="mRNA"/>
</dbReference>
<dbReference type="EMBL" id="AY086041">
    <property type="protein sequence ID" value="AAM63251.1"/>
    <property type="molecule type" value="mRNA"/>
</dbReference>
<dbReference type="PIR" id="T47744">
    <property type="entry name" value="T47744"/>
</dbReference>
<dbReference type="RefSeq" id="NP_191186.1">
    <property type="nucleotide sequence ID" value="NM_115485.3"/>
</dbReference>
<dbReference type="SMR" id="Q9LYL6"/>
<dbReference type="BioGRID" id="10109">
    <property type="interactions" value="18"/>
</dbReference>
<dbReference type="FunCoup" id="Q9LYL6">
    <property type="interactions" value="63"/>
</dbReference>
<dbReference type="IntAct" id="Q9LYL6">
    <property type="interactions" value="20"/>
</dbReference>
<dbReference type="PaxDb" id="3702-AT3G56270.1"/>
<dbReference type="ProteomicsDB" id="234605"/>
<dbReference type="EnsemblPlants" id="AT3G56270.1">
    <property type="protein sequence ID" value="AT3G56270.1"/>
    <property type="gene ID" value="AT3G56270"/>
</dbReference>
<dbReference type="GeneID" id="824793"/>
<dbReference type="Gramene" id="AT3G56270.1">
    <property type="protein sequence ID" value="AT3G56270.1"/>
    <property type="gene ID" value="AT3G56270"/>
</dbReference>
<dbReference type="KEGG" id="ath:AT3G56270"/>
<dbReference type="Araport" id="AT3G56270"/>
<dbReference type="TAIR" id="AT3G56270"/>
<dbReference type="eggNOG" id="ENOG502RR51">
    <property type="taxonomic scope" value="Eukaryota"/>
</dbReference>
<dbReference type="HOGENOM" id="CLU_017338_2_0_1"/>
<dbReference type="InParanoid" id="Q9LYL6"/>
<dbReference type="OMA" id="QTELYCH"/>
<dbReference type="OrthoDB" id="1092978at2759"/>
<dbReference type="PhylomeDB" id="Q9LYL6"/>
<dbReference type="PRO" id="PR:Q9LYL6"/>
<dbReference type="Proteomes" id="UP000006548">
    <property type="component" value="Chromosome 3"/>
</dbReference>
<dbReference type="ExpressionAtlas" id="Q9LYL6">
    <property type="expression patterns" value="baseline and differential"/>
</dbReference>
<dbReference type="PANTHER" id="PTHR32054">
    <property type="entry name" value="HEAVY CHAIN, PUTATIVE, EXPRESSED-RELATED-RELATED"/>
    <property type="match status" value="1"/>
</dbReference>
<dbReference type="PANTHER" id="PTHR32054:SF48">
    <property type="entry name" value="WEB FAMILY PROTEIN"/>
    <property type="match status" value="1"/>
</dbReference>
<comment type="interaction">
    <interactant intactId="EBI-1238139">
        <id>Q9LYL6</id>
    </interactant>
    <interactant intactId="EBI-1536925">
        <id>Q9FYK5</id>
        <label>ESR2</label>
    </interactant>
    <organismsDiffer>false</organismsDiffer>
    <experiments>3</experiments>
</comment>
<comment type="interaction">
    <interactant intactId="EBI-1238139">
        <id>Q9LYL6</id>
    </interactant>
    <interactant intactId="EBI-530486">
        <id>P46639</id>
        <label>KNAT1</label>
    </interactant>
    <organismsDiffer>false</organismsDiffer>
    <experiments>3</experiments>
</comment>
<comment type="interaction">
    <interactant intactId="EBI-1238139">
        <id>Q9LYL6</id>
    </interactant>
    <interactant intactId="EBI-1645478">
        <id>Q38845</id>
        <label>PP2AA1</label>
    </interactant>
    <organismsDiffer>false</organismsDiffer>
    <experiments>3</experiments>
</comment>
<comment type="interaction">
    <interactant intactId="EBI-1238139">
        <id>Q9LYL6</id>
    </interactant>
    <interactant intactId="EBI-1764934">
        <id>P49598</id>
        <label>PP2CA</label>
    </interactant>
    <organismsDiffer>false</organismsDiffer>
    <experiments>3</experiments>
</comment>
<comment type="similarity">
    <text evidence="2">Belongs to the WEB family.</text>
</comment>
<accession>Q9LYL6</accession>
<sequence length="446" mass="51240">MAERQQSPAAETIPGTPVIREVRTGTGSENFNPENTRRGCLRAEIDISPQLYGGRGFWVPFNLEDNYDCVGEFDIKRMEEQTVELEKDLIMKELETLDLLEALGSTKRIFEDLKWQLQQQALRCKETPQHLRSHSKEMVDEHCHRNPLKSPDLMTMEMKQAGMNLCKTMDDLALIHSYAESLNMKTKEEKDVLGVASLAEELNSLKFKPAGPDQVERFNTENLPVNPQCEQIKMVVETYDTAFHKQSKTCPRTADMRLVAARKMEEAARAAEALALAEMTILSSRRNQDALCFPKTPCFPLTLKAQMNKELSTNVSRIEILRKLEEANEEVKQSKQALEVALNRVEIASVKQLEAEEAFRQWNIESWKDQKAVGAKRSMKRESFPQRSFLSHINQHEPLIDLPEPMLKRNVSMGNALNRKDEKQLVTPRRKFRFIQTHQASIRKTE</sequence>